<gene>
    <name evidence="1" type="primary">atpH</name>
    <name type="ordered locus">AHA_4265</name>
</gene>
<organism>
    <name type="scientific">Aeromonas hydrophila subsp. hydrophila (strain ATCC 7966 / DSM 30187 / BCRC 13018 / CCUG 14551 / JCM 1027 / KCTC 2358 / NCIMB 9240 / NCTC 8049)</name>
    <dbReference type="NCBI Taxonomy" id="380703"/>
    <lineage>
        <taxon>Bacteria</taxon>
        <taxon>Pseudomonadati</taxon>
        <taxon>Pseudomonadota</taxon>
        <taxon>Gammaproteobacteria</taxon>
        <taxon>Aeromonadales</taxon>
        <taxon>Aeromonadaceae</taxon>
        <taxon>Aeromonas</taxon>
    </lineage>
</organism>
<name>ATPD_AERHH</name>
<proteinExistence type="inferred from homology"/>
<reference key="1">
    <citation type="journal article" date="2006" name="J. Bacteriol.">
        <title>Genome sequence of Aeromonas hydrophila ATCC 7966T: jack of all trades.</title>
        <authorList>
            <person name="Seshadri R."/>
            <person name="Joseph S.W."/>
            <person name="Chopra A.K."/>
            <person name="Sha J."/>
            <person name="Shaw J."/>
            <person name="Graf J."/>
            <person name="Haft D.H."/>
            <person name="Wu M."/>
            <person name="Ren Q."/>
            <person name="Rosovitz M.J."/>
            <person name="Madupu R."/>
            <person name="Tallon L."/>
            <person name="Kim M."/>
            <person name="Jin S."/>
            <person name="Vuong H."/>
            <person name="Stine O.C."/>
            <person name="Ali A."/>
            <person name="Horneman A.J."/>
            <person name="Heidelberg J.F."/>
        </authorList>
    </citation>
    <scope>NUCLEOTIDE SEQUENCE [LARGE SCALE GENOMIC DNA]</scope>
    <source>
        <strain>ATCC 7966 / DSM 30187 / BCRC 13018 / CCUG 14551 / JCM 1027 / KCTC 2358 / NCIMB 9240 / NCTC 8049</strain>
    </source>
</reference>
<evidence type="ECO:0000255" key="1">
    <source>
        <dbReference type="HAMAP-Rule" id="MF_01416"/>
    </source>
</evidence>
<keyword id="KW-0066">ATP synthesis</keyword>
<keyword id="KW-0997">Cell inner membrane</keyword>
<keyword id="KW-1003">Cell membrane</keyword>
<keyword id="KW-0139">CF(1)</keyword>
<keyword id="KW-0375">Hydrogen ion transport</keyword>
<keyword id="KW-0406">Ion transport</keyword>
<keyword id="KW-0472">Membrane</keyword>
<keyword id="KW-1185">Reference proteome</keyword>
<keyword id="KW-0813">Transport</keyword>
<protein>
    <recommendedName>
        <fullName evidence="1">ATP synthase subunit delta</fullName>
    </recommendedName>
    <alternativeName>
        <fullName evidence="1">ATP synthase F(1) sector subunit delta</fullName>
    </alternativeName>
    <alternativeName>
        <fullName evidence="1">F-type ATPase subunit delta</fullName>
        <shortName evidence="1">F-ATPase subunit delta</shortName>
    </alternativeName>
</protein>
<sequence length="177" mass="19037">MSELTTIARPYAKAAFEFAVEHKAVDQWLGMLGFAAQVAENETIHNLVNGSVAAEELASIFVGICGEQLDEHGQNLIRVMAENGRLGVLPAVVAEFVAFKAELDKEVQADVISAIELTDQQKANIQASLEQRLARKVKLNCSMDASLMAGVLIKAGDLVIDGTVRGKLDRMADALQS</sequence>
<feature type="chain" id="PRO_0000370872" description="ATP synthase subunit delta">
    <location>
        <begin position="1"/>
        <end position="177"/>
    </location>
</feature>
<comment type="function">
    <text evidence="1">F(1)F(0) ATP synthase produces ATP from ADP in the presence of a proton or sodium gradient. F-type ATPases consist of two structural domains, F(1) containing the extramembraneous catalytic core and F(0) containing the membrane proton channel, linked together by a central stalk and a peripheral stalk. During catalysis, ATP synthesis in the catalytic domain of F(1) is coupled via a rotary mechanism of the central stalk subunits to proton translocation.</text>
</comment>
<comment type="function">
    <text evidence="1">This protein is part of the stalk that links CF(0) to CF(1). It either transmits conformational changes from CF(0) to CF(1) or is implicated in proton conduction.</text>
</comment>
<comment type="subunit">
    <text evidence="1">F-type ATPases have 2 components, F(1) - the catalytic core - and F(0) - the membrane proton channel. F(1) has five subunits: alpha(3), beta(3), gamma(1), delta(1), epsilon(1). F(0) has three main subunits: a(1), b(2) and c(10-14). The alpha and beta chains form an alternating ring which encloses part of the gamma chain. F(1) is attached to F(0) by a central stalk formed by the gamma and epsilon chains, while a peripheral stalk is formed by the delta and b chains.</text>
</comment>
<comment type="subcellular location">
    <subcellularLocation>
        <location evidence="1">Cell inner membrane</location>
        <topology evidence="1">Peripheral membrane protein</topology>
    </subcellularLocation>
</comment>
<comment type="similarity">
    <text evidence="1">Belongs to the ATPase delta chain family.</text>
</comment>
<accession>A0KQY1</accession>
<dbReference type="EMBL" id="CP000462">
    <property type="protein sequence ID" value="ABK37532.1"/>
    <property type="molecule type" value="Genomic_DNA"/>
</dbReference>
<dbReference type="RefSeq" id="WP_011707911.1">
    <property type="nucleotide sequence ID" value="NC_008570.1"/>
</dbReference>
<dbReference type="RefSeq" id="YP_858682.1">
    <property type="nucleotide sequence ID" value="NC_008570.1"/>
</dbReference>
<dbReference type="SMR" id="A0KQY1"/>
<dbReference type="STRING" id="380703.AHA_4265"/>
<dbReference type="EnsemblBacteria" id="ABK37532">
    <property type="protein sequence ID" value="ABK37532"/>
    <property type="gene ID" value="AHA_4265"/>
</dbReference>
<dbReference type="GeneID" id="4487369"/>
<dbReference type="KEGG" id="aha:AHA_4265"/>
<dbReference type="PATRIC" id="fig|380703.7.peg.4215"/>
<dbReference type="eggNOG" id="COG0712">
    <property type="taxonomic scope" value="Bacteria"/>
</dbReference>
<dbReference type="HOGENOM" id="CLU_085114_3_0_6"/>
<dbReference type="OrthoDB" id="9816221at2"/>
<dbReference type="Proteomes" id="UP000000756">
    <property type="component" value="Chromosome"/>
</dbReference>
<dbReference type="GO" id="GO:0005886">
    <property type="term" value="C:plasma membrane"/>
    <property type="evidence" value="ECO:0007669"/>
    <property type="project" value="UniProtKB-SubCell"/>
</dbReference>
<dbReference type="GO" id="GO:0045259">
    <property type="term" value="C:proton-transporting ATP synthase complex"/>
    <property type="evidence" value="ECO:0007669"/>
    <property type="project" value="UniProtKB-KW"/>
</dbReference>
<dbReference type="GO" id="GO:0046933">
    <property type="term" value="F:proton-transporting ATP synthase activity, rotational mechanism"/>
    <property type="evidence" value="ECO:0007669"/>
    <property type="project" value="UniProtKB-UniRule"/>
</dbReference>
<dbReference type="Gene3D" id="1.10.520.20">
    <property type="entry name" value="N-terminal domain of the delta subunit of the F1F0-ATP synthase"/>
    <property type="match status" value="1"/>
</dbReference>
<dbReference type="HAMAP" id="MF_01416">
    <property type="entry name" value="ATP_synth_delta_bact"/>
    <property type="match status" value="1"/>
</dbReference>
<dbReference type="InterPro" id="IPR026015">
    <property type="entry name" value="ATP_synth_OSCP/delta_N_sf"/>
</dbReference>
<dbReference type="InterPro" id="IPR020781">
    <property type="entry name" value="ATPase_OSCP/d_CS"/>
</dbReference>
<dbReference type="InterPro" id="IPR000711">
    <property type="entry name" value="ATPase_OSCP/dsu"/>
</dbReference>
<dbReference type="NCBIfam" id="TIGR01145">
    <property type="entry name" value="ATP_synt_delta"/>
    <property type="match status" value="1"/>
</dbReference>
<dbReference type="NCBIfam" id="NF004402">
    <property type="entry name" value="PRK05758.2-2"/>
    <property type="match status" value="1"/>
</dbReference>
<dbReference type="NCBIfam" id="NF004404">
    <property type="entry name" value="PRK05758.2-5"/>
    <property type="match status" value="1"/>
</dbReference>
<dbReference type="PANTHER" id="PTHR11910">
    <property type="entry name" value="ATP SYNTHASE DELTA CHAIN"/>
    <property type="match status" value="1"/>
</dbReference>
<dbReference type="Pfam" id="PF00213">
    <property type="entry name" value="OSCP"/>
    <property type="match status" value="1"/>
</dbReference>
<dbReference type="PRINTS" id="PR00125">
    <property type="entry name" value="ATPASEDELTA"/>
</dbReference>
<dbReference type="SUPFAM" id="SSF47928">
    <property type="entry name" value="N-terminal domain of the delta subunit of the F1F0-ATP synthase"/>
    <property type="match status" value="1"/>
</dbReference>
<dbReference type="PROSITE" id="PS00389">
    <property type="entry name" value="ATPASE_DELTA"/>
    <property type="match status" value="1"/>
</dbReference>